<evidence type="ECO:0000255" key="1">
    <source>
        <dbReference type="PROSITE-ProRule" id="PRU00089"/>
    </source>
</evidence>
<evidence type="ECO:0000269" key="2">
    <source>
    </source>
</evidence>
<reference key="1">
    <citation type="journal article" date="2005" name="Science">
        <title>The transcriptional landscape of the mammalian genome.</title>
        <authorList>
            <person name="Carninci P."/>
            <person name="Kasukawa T."/>
            <person name="Katayama S."/>
            <person name="Gough J."/>
            <person name="Frith M.C."/>
            <person name="Maeda N."/>
            <person name="Oyama R."/>
            <person name="Ravasi T."/>
            <person name="Lenhard B."/>
            <person name="Wells C."/>
            <person name="Kodzius R."/>
            <person name="Shimokawa K."/>
            <person name="Bajic V.B."/>
            <person name="Brenner S.E."/>
            <person name="Batalov S."/>
            <person name="Forrest A.R."/>
            <person name="Zavolan M."/>
            <person name="Davis M.J."/>
            <person name="Wilming L.G."/>
            <person name="Aidinis V."/>
            <person name="Allen J.E."/>
            <person name="Ambesi-Impiombato A."/>
            <person name="Apweiler R."/>
            <person name="Aturaliya R.N."/>
            <person name="Bailey T.L."/>
            <person name="Bansal M."/>
            <person name="Baxter L."/>
            <person name="Beisel K.W."/>
            <person name="Bersano T."/>
            <person name="Bono H."/>
            <person name="Chalk A.M."/>
            <person name="Chiu K.P."/>
            <person name="Choudhary V."/>
            <person name="Christoffels A."/>
            <person name="Clutterbuck D.R."/>
            <person name="Crowe M.L."/>
            <person name="Dalla E."/>
            <person name="Dalrymple B.P."/>
            <person name="de Bono B."/>
            <person name="Della Gatta G."/>
            <person name="di Bernardo D."/>
            <person name="Down T."/>
            <person name="Engstrom P."/>
            <person name="Fagiolini M."/>
            <person name="Faulkner G."/>
            <person name="Fletcher C.F."/>
            <person name="Fukushima T."/>
            <person name="Furuno M."/>
            <person name="Futaki S."/>
            <person name="Gariboldi M."/>
            <person name="Georgii-Hemming P."/>
            <person name="Gingeras T.R."/>
            <person name="Gojobori T."/>
            <person name="Green R.E."/>
            <person name="Gustincich S."/>
            <person name="Harbers M."/>
            <person name="Hayashi Y."/>
            <person name="Hensch T.K."/>
            <person name="Hirokawa N."/>
            <person name="Hill D."/>
            <person name="Huminiecki L."/>
            <person name="Iacono M."/>
            <person name="Ikeo K."/>
            <person name="Iwama A."/>
            <person name="Ishikawa T."/>
            <person name="Jakt M."/>
            <person name="Kanapin A."/>
            <person name="Katoh M."/>
            <person name="Kawasawa Y."/>
            <person name="Kelso J."/>
            <person name="Kitamura H."/>
            <person name="Kitano H."/>
            <person name="Kollias G."/>
            <person name="Krishnan S.P."/>
            <person name="Kruger A."/>
            <person name="Kummerfeld S.K."/>
            <person name="Kurochkin I.V."/>
            <person name="Lareau L.F."/>
            <person name="Lazarevic D."/>
            <person name="Lipovich L."/>
            <person name="Liu J."/>
            <person name="Liuni S."/>
            <person name="McWilliam S."/>
            <person name="Madan Babu M."/>
            <person name="Madera M."/>
            <person name="Marchionni L."/>
            <person name="Matsuda H."/>
            <person name="Matsuzawa S."/>
            <person name="Miki H."/>
            <person name="Mignone F."/>
            <person name="Miyake S."/>
            <person name="Morris K."/>
            <person name="Mottagui-Tabar S."/>
            <person name="Mulder N."/>
            <person name="Nakano N."/>
            <person name="Nakauchi H."/>
            <person name="Ng P."/>
            <person name="Nilsson R."/>
            <person name="Nishiguchi S."/>
            <person name="Nishikawa S."/>
            <person name="Nori F."/>
            <person name="Ohara O."/>
            <person name="Okazaki Y."/>
            <person name="Orlando V."/>
            <person name="Pang K.C."/>
            <person name="Pavan W.J."/>
            <person name="Pavesi G."/>
            <person name="Pesole G."/>
            <person name="Petrovsky N."/>
            <person name="Piazza S."/>
            <person name="Reed J."/>
            <person name="Reid J.F."/>
            <person name="Ring B.Z."/>
            <person name="Ringwald M."/>
            <person name="Rost B."/>
            <person name="Ruan Y."/>
            <person name="Salzberg S.L."/>
            <person name="Sandelin A."/>
            <person name="Schneider C."/>
            <person name="Schoenbach C."/>
            <person name="Sekiguchi K."/>
            <person name="Semple C.A."/>
            <person name="Seno S."/>
            <person name="Sessa L."/>
            <person name="Sheng Y."/>
            <person name="Shibata Y."/>
            <person name="Shimada H."/>
            <person name="Shimada K."/>
            <person name="Silva D."/>
            <person name="Sinclair B."/>
            <person name="Sperling S."/>
            <person name="Stupka E."/>
            <person name="Sugiura K."/>
            <person name="Sultana R."/>
            <person name="Takenaka Y."/>
            <person name="Taki K."/>
            <person name="Tammoja K."/>
            <person name="Tan S.L."/>
            <person name="Tang S."/>
            <person name="Taylor M.S."/>
            <person name="Tegner J."/>
            <person name="Teichmann S.A."/>
            <person name="Ueda H.R."/>
            <person name="van Nimwegen E."/>
            <person name="Verardo R."/>
            <person name="Wei C.L."/>
            <person name="Yagi K."/>
            <person name="Yamanishi H."/>
            <person name="Zabarovsky E."/>
            <person name="Zhu S."/>
            <person name="Zimmer A."/>
            <person name="Hide W."/>
            <person name="Bult C."/>
            <person name="Grimmond S.M."/>
            <person name="Teasdale R.D."/>
            <person name="Liu E.T."/>
            <person name="Brusic V."/>
            <person name="Quackenbush J."/>
            <person name="Wahlestedt C."/>
            <person name="Mattick J.S."/>
            <person name="Hume D.A."/>
            <person name="Kai C."/>
            <person name="Sasaki D."/>
            <person name="Tomaru Y."/>
            <person name="Fukuda S."/>
            <person name="Kanamori-Katayama M."/>
            <person name="Suzuki M."/>
            <person name="Aoki J."/>
            <person name="Arakawa T."/>
            <person name="Iida J."/>
            <person name="Imamura K."/>
            <person name="Itoh M."/>
            <person name="Kato T."/>
            <person name="Kawaji H."/>
            <person name="Kawagashira N."/>
            <person name="Kawashima T."/>
            <person name="Kojima M."/>
            <person name="Kondo S."/>
            <person name="Konno H."/>
            <person name="Nakano K."/>
            <person name="Ninomiya N."/>
            <person name="Nishio T."/>
            <person name="Okada M."/>
            <person name="Plessy C."/>
            <person name="Shibata K."/>
            <person name="Shiraki T."/>
            <person name="Suzuki S."/>
            <person name="Tagami M."/>
            <person name="Waki K."/>
            <person name="Watahiki A."/>
            <person name="Okamura-Oho Y."/>
            <person name="Suzuki H."/>
            <person name="Kawai J."/>
            <person name="Hayashizaki Y."/>
        </authorList>
    </citation>
    <scope>NUCLEOTIDE SEQUENCE [LARGE SCALE MRNA]</scope>
    <source>
        <tissue>Mammary gland</tissue>
    </source>
</reference>
<reference key="2">
    <citation type="journal article" date="2009" name="PLoS Biol.">
        <title>Lineage-specific biology revealed by a finished genome assembly of the mouse.</title>
        <authorList>
            <person name="Church D.M."/>
            <person name="Goodstadt L."/>
            <person name="Hillier L.W."/>
            <person name="Zody M.C."/>
            <person name="Goldstein S."/>
            <person name="She X."/>
            <person name="Bult C.J."/>
            <person name="Agarwala R."/>
            <person name="Cherry J.L."/>
            <person name="DiCuccio M."/>
            <person name="Hlavina W."/>
            <person name="Kapustin Y."/>
            <person name="Meric P."/>
            <person name="Maglott D."/>
            <person name="Birtle Z."/>
            <person name="Marques A.C."/>
            <person name="Graves T."/>
            <person name="Zhou S."/>
            <person name="Teague B."/>
            <person name="Potamousis K."/>
            <person name="Churas C."/>
            <person name="Place M."/>
            <person name="Herschleb J."/>
            <person name="Runnheim R."/>
            <person name="Forrest D."/>
            <person name="Amos-Landgraf J."/>
            <person name="Schwartz D.C."/>
            <person name="Cheng Z."/>
            <person name="Lindblad-Toh K."/>
            <person name="Eichler E.E."/>
            <person name="Ponting C.P."/>
        </authorList>
    </citation>
    <scope>NUCLEOTIDE SEQUENCE [LARGE SCALE GENOMIC DNA]</scope>
    <source>
        <strain>C57BL/6J</strain>
    </source>
</reference>
<reference key="3">
    <citation type="journal article" date="2004" name="Genome Res.">
        <title>The status, quality, and expansion of the NIH full-length cDNA project: the Mammalian Gene Collection (MGC).</title>
        <authorList>
            <consortium name="The MGC Project Team"/>
        </authorList>
    </citation>
    <scope>NUCLEOTIDE SEQUENCE [LARGE SCALE MRNA]</scope>
    <source>
        <tissue>Brain</tissue>
    </source>
</reference>
<reference key="4">
    <citation type="journal article" date="2004" name="Int. J. Oncol.">
        <title>Identification and characterization of human FOXN6, mouse Foxn6, and rat Foxn6 genes in silico.</title>
        <authorList>
            <person name="Katoh M."/>
            <person name="Katoh M."/>
        </authorList>
    </citation>
    <scope>DEVELOPMENTAL STAGE</scope>
</reference>
<gene>
    <name type="primary">Foxr2</name>
    <name type="synonym">Foxn6</name>
</gene>
<name>FOXR2_MOUSE</name>
<proteinExistence type="evidence at transcript level"/>
<dbReference type="EMBL" id="AK145057">
    <property type="protein sequence ID" value="BAE26209.1"/>
    <property type="molecule type" value="mRNA"/>
</dbReference>
<dbReference type="EMBL" id="AL672293">
    <property type="status" value="NOT_ANNOTATED_CDS"/>
    <property type="molecule type" value="Genomic_DNA"/>
</dbReference>
<dbReference type="EMBL" id="BC151186">
    <property type="protein sequence ID" value="AAI51187.1"/>
    <property type="molecule type" value="mRNA"/>
</dbReference>
<dbReference type="CCDS" id="CCDS30479.1"/>
<dbReference type="RefSeq" id="NP_001030066.1">
    <property type="nucleotide sequence ID" value="NM_001034894.3"/>
</dbReference>
<dbReference type="RefSeq" id="XP_011246143.1">
    <property type="nucleotide sequence ID" value="XM_011247841.1"/>
</dbReference>
<dbReference type="RefSeq" id="XP_017174032.1">
    <property type="nucleotide sequence ID" value="XM_017318543.2"/>
</dbReference>
<dbReference type="SMR" id="Q3UM89"/>
<dbReference type="FunCoup" id="Q3UM89">
    <property type="interactions" value="1249"/>
</dbReference>
<dbReference type="STRING" id="10090.ENSMUSP00000093984"/>
<dbReference type="iPTMnet" id="Q3UM89"/>
<dbReference type="PhosphoSitePlus" id="Q3UM89"/>
<dbReference type="PaxDb" id="10090-ENSMUSP00000093984"/>
<dbReference type="PeptideAtlas" id="Q3UM89"/>
<dbReference type="Antibodypedia" id="12993">
    <property type="antibodies" value="117 antibodies from 25 providers"/>
</dbReference>
<dbReference type="DNASU" id="436240"/>
<dbReference type="Ensembl" id="ENSMUST00000096265.10">
    <property type="protein sequence ID" value="ENSMUSP00000093984.4"/>
    <property type="gene ID" value="ENSMUSG00000071665.11"/>
</dbReference>
<dbReference type="Ensembl" id="ENSMUST00000163801.2">
    <property type="protein sequence ID" value="ENSMUSP00000128452.2"/>
    <property type="gene ID" value="ENSMUSG00000071665.11"/>
</dbReference>
<dbReference type="GeneID" id="436240"/>
<dbReference type="KEGG" id="mmu:436240"/>
<dbReference type="UCSC" id="uc009uqs.2">
    <property type="organism name" value="mouse"/>
</dbReference>
<dbReference type="AGR" id="MGI:3511682"/>
<dbReference type="CTD" id="139628"/>
<dbReference type="MGI" id="MGI:3511682">
    <property type="gene designation" value="Foxr2"/>
</dbReference>
<dbReference type="VEuPathDB" id="HostDB:ENSMUSG00000071665"/>
<dbReference type="eggNOG" id="KOG2294">
    <property type="taxonomic scope" value="Eukaryota"/>
</dbReference>
<dbReference type="GeneTree" id="ENSGT00940000162993"/>
<dbReference type="HOGENOM" id="CLU_077699_3_1_1"/>
<dbReference type="InParanoid" id="Q3UM89"/>
<dbReference type="OMA" id="QSPPHAC"/>
<dbReference type="OrthoDB" id="10070006at2759"/>
<dbReference type="PhylomeDB" id="Q3UM89"/>
<dbReference type="TreeFam" id="TF329867"/>
<dbReference type="BioGRID-ORCS" id="436240">
    <property type="hits" value="2 hits in 76 CRISPR screens"/>
</dbReference>
<dbReference type="PRO" id="PR:Q3UM89"/>
<dbReference type="Proteomes" id="UP000000589">
    <property type="component" value="Chromosome X"/>
</dbReference>
<dbReference type="RNAct" id="Q3UM89">
    <property type="molecule type" value="protein"/>
</dbReference>
<dbReference type="Bgee" id="ENSMUSG00000071665">
    <property type="expression patterns" value="Expressed in epiblast (generic) and 14 other cell types or tissues"/>
</dbReference>
<dbReference type="GO" id="GO:0005654">
    <property type="term" value="C:nucleoplasm"/>
    <property type="evidence" value="ECO:0007669"/>
    <property type="project" value="Ensembl"/>
</dbReference>
<dbReference type="GO" id="GO:0003700">
    <property type="term" value="F:DNA-binding transcription factor activity"/>
    <property type="evidence" value="ECO:0007669"/>
    <property type="project" value="InterPro"/>
</dbReference>
<dbReference type="GO" id="GO:1990837">
    <property type="term" value="F:sequence-specific double-stranded DNA binding"/>
    <property type="evidence" value="ECO:0007669"/>
    <property type="project" value="Ensembl"/>
</dbReference>
<dbReference type="CDD" id="cd20036">
    <property type="entry name" value="FH_FOXR"/>
    <property type="match status" value="1"/>
</dbReference>
<dbReference type="Gene3D" id="1.10.10.10">
    <property type="entry name" value="Winged helix-like DNA-binding domain superfamily/Winged helix DNA-binding domain"/>
    <property type="match status" value="1"/>
</dbReference>
<dbReference type="InterPro" id="IPR001766">
    <property type="entry name" value="Fork_head_dom"/>
</dbReference>
<dbReference type="InterPro" id="IPR052328">
    <property type="entry name" value="FOX_transcription_regulators"/>
</dbReference>
<dbReference type="InterPro" id="IPR036388">
    <property type="entry name" value="WH-like_DNA-bd_sf"/>
</dbReference>
<dbReference type="InterPro" id="IPR036390">
    <property type="entry name" value="WH_DNA-bd_sf"/>
</dbReference>
<dbReference type="PANTHER" id="PTHR46789">
    <property type="entry name" value="FORKHEAD BOX PROTEIN R1"/>
    <property type="match status" value="1"/>
</dbReference>
<dbReference type="PANTHER" id="PTHR46789:SF2">
    <property type="entry name" value="FORKHEAD BOX PROTEIN R2"/>
    <property type="match status" value="1"/>
</dbReference>
<dbReference type="Pfam" id="PF00250">
    <property type="entry name" value="Forkhead"/>
    <property type="match status" value="1"/>
</dbReference>
<dbReference type="PRINTS" id="PR00053">
    <property type="entry name" value="FORKHEAD"/>
</dbReference>
<dbReference type="SMART" id="SM00339">
    <property type="entry name" value="FH"/>
    <property type="match status" value="1"/>
</dbReference>
<dbReference type="SUPFAM" id="SSF46785">
    <property type="entry name" value="Winged helix' DNA-binding domain"/>
    <property type="match status" value="1"/>
</dbReference>
<dbReference type="PROSITE" id="PS50039">
    <property type="entry name" value="FORK_HEAD_3"/>
    <property type="match status" value="1"/>
</dbReference>
<keyword id="KW-0238">DNA-binding</keyword>
<keyword id="KW-0539">Nucleus</keyword>
<keyword id="KW-1185">Reference proteome</keyword>
<keyword id="KW-0804">Transcription</keyword>
<keyword id="KW-0805">Transcription regulation</keyword>
<organism>
    <name type="scientific">Mus musculus</name>
    <name type="common">Mouse</name>
    <dbReference type="NCBI Taxonomy" id="10090"/>
    <lineage>
        <taxon>Eukaryota</taxon>
        <taxon>Metazoa</taxon>
        <taxon>Chordata</taxon>
        <taxon>Craniata</taxon>
        <taxon>Vertebrata</taxon>
        <taxon>Euteleostomi</taxon>
        <taxon>Mammalia</taxon>
        <taxon>Eutheria</taxon>
        <taxon>Euarchontoglires</taxon>
        <taxon>Glires</taxon>
        <taxon>Rodentia</taxon>
        <taxon>Myomorpha</taxon>
        <taxon>Muroidea</taxon>
        <taxon>Muridae</taxon>
        <taxon>Murinae</taxon>
        <taxon>Mus</taxon>
        <taxon>Mus</taxon>
    </lineage>
</organism>
<accession>Q3UM89</accession>
<accession>A2AG72</accession>
<accession>B2RXE0</accession>
<comment type="subcellular location">
    <subcellularLocation>
        <location evidence="1">Nucleus</location>
    </subcellularLocation>
</comment>
<comment type="developmental stage">
    <text evidence="2">Expressed in 9.5 dpc embryo.</text>
</comment>
<protein>
    <recommendedName>
        <fullName>Forkhead box protein R2</fullName>
    </recommendedName>
    <alternativeName>
        <fullName>Forkhead box protein N6</fullName>
    </alternativeName>
</protein>
<sequence length="302" mass="35036">MDVKVKNRDFWYSLHGQVPGMLDWDMGNEFFLPCTMDQCSFAEQSLAKYKIQLTKPPALPQKKKSNFDDDGPPAEPSLWMWVNPNIVCPINSKEAPNTIHKILPSAPFPQTGESDYLGTQRMVQSLSVLHTEHHQQQKLLIYSTAPDFIEEETKEQECTSSKKYSKKHTVCHGPHREKESWPRPPLNYSHLVALALKSSPSCGLNVQQIYNFTRQHFPYFRTAPEGWKNTIRHNLCSLTCFEKVPVDLEDEPDGKPRSFLWKLTDEGNRFFQEDTRVLAYARRESIKQSMRQPELIDLLFHL</sequence>
<feature type="chain" id="PRO_0000253781" description="Forkhead box protein R2">
    <location>
        <begin position="1"/>
        <end position="302"/>
    </location>
</feature>
<feature type="DNA-binding region" description="Fork-head" evidence="1">
    <location>
        <begin position="183"/>
        <end position="285"/>
    </location>
</feature>